<accession>Q8VDG5</accession>
<accession>Q3TVW0</accession>
<accession>Q9D376</accession>
<accession>Q9DA06</accession>
<comment type="function">
    <text evidence="2">Catalyzes the second step in the biosynthesis of coenzyme A from vitamin B5, where cysteine is conjugated to 4'-phosphopantothenate to form 4-phosphopantothenoylcysteine. Has a preference for ATP over CTP as a cosubstrate.</text>
</comment>
<comment type="catalytic activity">
    <reaction evidence="2">
        <text>(R)-4'-phosphopantothenate + L-cysteine + ATP = N-[(R)-4-phosphopantothenoyl]-L-cysteine + AMP + diphosphate + H(+)</text>
        <dbReference type="Rhea" id="RHEA:25156"/>
        <dbReference type="ChEBI" id="CHEBI:10986"/>
        <dbReference type="ChEBI" id="CHEBI:15378"/>
        <dbReference type="ChEBI" id="CHEBI:30616"/>
        <dbReference type="ChEBI" id="CHEBI:33019"/>
        <dbReference type="ChEBI" id="CHEBI:35235"/>
        <dbReference type="ChEBI" id="CHEBI:59458"/>
        <dbReference type="ChEBI" id="CHEBI:456215"/>
        <dbReference type="EC" id="6.3.2.51"/>
    </reaction>
    <physiologicalReaction direction="left-to-right" evidence="2">
        <dbReference type="Rhea" id="RHEA:25157"/>
    </physiologicalReaction>
</comment>
<comment type="catalytic activity">
    <reaction evidence="2">
        <text>(R)-4'-phosphopantothenate + L-cysteine + CTP = N-[(R)-4-phosphopantothenoyl]-L-cysteine + CMP + diphosphate + H(+)</text>
        <dbReference type="Rhea" id="RHEA:19397"/>
        <dbReference type="ChEBI" id="CHEBI:10986"/>
        <dbReference type="ChEBI" id="CHEBI:15378"/>
        <dbReference type="ChEBI" id="CHEBI:33019"/>
        <dbReference type="ChEBI" id="CHEBI:35235"/>
        <dbReference type="ChEBI" id="CHEBI:37563"/>
        <dbReference type="ChEBI" id="CHEBI:59458"/>
        <dbReference type="ChEBI" id="CHEBI:60377"/>
    </reaction>
    <physiologicalReaction direction="left-to-right" evidence="2">
        <dbReference type="Rhea" id="RHEA:19398"/>
    </physiologicalReaction>
</comment>
<comment type="pathway">
    <text evidence="2">Cofactor biosynthesis; coenzyme A biosynthesis; CoA from (R)-pantothenate: step 2/5.</text>
</comment>
<comment type="subunit">
    <text evidence="2">Homodimer.</text>
</comment>
<comment type="alternative products">
    <event type="alternative splicing"/>
    <isoform>
        <id>Q8VDG5-1</id>
        <name>1</name>
        <sequence type="displayed"/>
    </isoform>
    <isoform>
        <id>Q8VDG5-2</id>
        <name>2</name>
        <sequence type="described" ref="VSP_010244"/>
    </isoform>
</comment>
<comment type="miscellaneous">
    <text evidence="1">The mammalian enzyme has a preference for ATP over CTP, in contrast to the E.coli ortholog.</text>
</comment>
<comment type="similarity">
    <text evidence="4">Belongs to the PPC synthetase family.</text>
</comment>
<sequence>MAEMDLVAELPRPAGAARWAEVMARFAARLGEQGRRVVLITSGGTKVPLEARAVRFLDNFSSGRRGAASAEVFLAAGYGVLFLYRARSAFPYAHRFPPQAWLSALRPSGPAQSGKLSLEAEENALPGFAAALQSYQEAAAAGTFLAVEFTTLADYLHLLQAAALALSPLGSSAMFYLAAAVSDFYIPVSEMPEHKIHSSGGPLQITMKMVPKMLSPLVKDWAPKAFVVSFKLETDPDIIISRARNALEVYQHQVVVANILESIKSFVIIVTKDSETELLLSEEEVAKGLVIEEKIVDDLRSRHTAFICDKN</sequence>
<keyword id="KW-0007">Acetylation</keyword>
<keyword id="KW-0025">Alternative splicing</keyword>
<keyword id="KW-0067">ATP-binding</keyword>
<keyword id="KW-0436">Ligase</keyword>
<keyword id="KW-0547">Nucleotide-binding</keyword>
<keyword id="KW-1185">Reference proteome</keyword>
<evidence type="ECO:0000250" key="1"/>
<evidence type="ECO:0000250" key="2">
    <source>
        <dbReference type="UniProtKB" id="Q9HAB8"/>
    </source>
</evidence>
<evidence type="ECO:0000303" key="3">
    <source>
    </source>
</evidence>
<evidence type="ECO:0000305" key="4"/>
<gene>
    <name type="primary">Ppcs</name>
    <name type="synonym">Coab</name>
</gene>
<reference key="1">
    <citation type="journal article" date="2005" name="Science">
        <title>The transcriptional landscape of the mammalian genome.</title>
        <authorList>
            <person name="Carninci P."/>
            <person name="Kasukawa T."/>
            <person name="Katayama S."/>
            <person name="Gough J."/>
            <person name="Frith M.C."/>
            <person name="Maeda N."/>
            <person name="Oyama R."/>
            <person name="Ravasi T."/>
            <person name="Lenhard B."/>
            <person name="Wells C."/>
            <person name="Kodzius R."/>
            <person name="Shimokawa K."/>
            <person name="Bajic V.B."/>
            <person name="Brenner S.E."/>
            <person name="Batalov S."/>
            <person name="Forrest A.R."/>
            <person name="Zavolan M."/>
            <person name="Davis M.J."/>
            <person name="Wilming L.G."/>
            <person name="Aidinis V."/>
            <person name="Allen J.E."/>
            <person name="Ambesi-Impiombato A."/>
            <person name="Apweiler R."/>
            <person name="Aturaliya R.N."/>
            <person name="Bailey T.L."/>
            <person name="Bansal M."/>
            <person name="Baxter L."/>
            <person name="Beisel K.W."/>
            <person name="Bersano T."/>
            <person name="Bono H."/>
            <person name="Chalk A.M."/>
            <person name="Chiu K.P."/>
            <person name="Choudhary V."/>
            <person name="Christoffels A."/>
            <person name="Clutterbuck D.R."/>
            <person name="Crowe M.L."/>
            <person name="Dalla E."/>
            <person name="Dalrymple B.P."/>
            <person name="de Bono B."/>
            <person name="Della Gatta G."/>
            <person name="di Bernardo D."/>
            <person name="Down T."/>
            <person name="Engstrom P."/>
            <person name="Fagiolini M."/>
            <person name="Faulkner G."/>
            <person name="Fletcher C.F."/>
            <person name="Fukushima T."/>
            <person name="Furuno M."/>
            <person name="Futaki S."/>
            <person name="Gariboldi M."/>
            <person name="Georgii-Hemming P."/>
            <person name="Gingeras T.R."/>
            <person name="Gojobori T."/>
            <person name="Green R.E."/>
            <person name="Gustincich S."/>
            <person name="Harbers M."/>
            <person name="Hayashi Y."/>
            <person name="Hensch T.K."/>
            <person name="Hirokawa N."/>
            <person name="Hill D."/>
            <person name="Huminiecki L."/>
            <person name="Iacono M."/>
            <person name="Ikeo K."/>
            <person name="Iwama A."/>
            <person name="Ishikawa T."/>
            <person name="Jakt M."/>
            <person name="Kanapin A."/>
            <person name="Katoh M."/>
            <person name="Kawasawa Y."/>
            <person name="Kelso J."/>
            <person name="Kitamura H."/>
            <person name="Kitano H."/>
            <person name="Kollias G."/>
            <person name="Krishnan S.P."/>
            <person name="Kruger A."/>
            <person name="Kummerfeld S.K."/>
            <person name="Kurochkin I.V."/>
            <person name="Lareau L.F."/>
            <person name="Lazarevic D."/>
            <person name="Lipovich L."/>
            <person name="Liu J."/>
            <person name="Liuni S."/>
            <person name="McWilliam S."/>
            <person name="Madan Babu M."/>
            <person name="Madera M."/>
            <person name="Marchionni L."/>
            <person name="Matsuda H."/>
            <person name="Matsuzawa S."/>
            <person name="Miki H."/>
            <person name="Mignone F."/>
            <person name="Miyake S."/>
            <person name="Morris K."/>
            <person name="Mottagui-Tabar S."/>
            <person name="Mulder N."/>
            <person name="Nakano N."/>
            <person name="Nakauchi H."/>
            <person name="Ng P."/>
            <person name="Nilsson R."/>
            <person name="Nishiguchi S."/>
            <person name="Nishikawa S."/>
            <person name="Nori F."/>
            <person name="Ohara O."/>
            <person name="Okazaki Y."/>
            <person name="Orlando V."/>
            <person name="Pang K.C."/>
            <person name="Pavan W.J."/>
            <person name="Pavesi G."/>
            <person name="Pesole G."/>
            <person name="Petrovsky N."/>
            <person name="Piazza S."/>
            <person name="Reed J."/>
            <person name="Reid J.F."/>
            <person name="Ring B.Z."/>
            <person name="Ringwald M."/>
            <person name="Rost B."/>
            <person name="Ruan Y."/>
            <person name="Salzberg S.L."/>
            <person name="Sandelin A."/>
            <person name="Schneider C."/>
            <person name="Schoenbach C."/>
            <person name="Sekiguchi K."/>
            <person name="Semple C.A."/>
            <person name="Seno S."/>
            <person name="Sessa L."/>
            <person name="Sheng Y."/>
            <person name="Shibata Y."/>
            <person name="Shimada H."/>
            <person name="Shimada K."/>
            <person name="Silva D."/>
            <person name="Sinclair B."/>
            <person name="Sperling S."/>
            <person name="Stupka E."/>
            <person name="Sugiura K."/>
            <person name="Sultana R."/>
            <person name="Takenaka Y."/>
            <person name="Taki K."/>
            <person name="Tammoja K."/>
            <person name="Tan S.L."/>
            <person name="Tang S."/>
            <person name="Taylor M.S."/>
            <person name="Tegner J."/>
            <person name="Teichmann S.A."/>
            <person name="Ueda H.R."/>
            <person name="van Nimwegen E."/>
            <person name="Verardo R."/>
            <person name="Wei C.L."/>
            <person name="Yagi K."/>
            <person name="Yamanishi H."/>
            <person name="Zabarovsky E."/>
            <person name="Zhu S."/>
            <person name="Zimmer A."/>
            <person name="Hide W."/>
            <person name="Bult C."/>
            <person name="Grimmond S.M."/>
            <person name="Teasdale R.D."/>
            <person name="Liu E.T."/>
            <person name="Brusic V."/>
            <person name="Quackenbush J."/>
            <person name="Wahlestedt C."/>
            <person name="Mattick J.S."/>
            <person name="Hume D.A."/>
            <person name="Kai C."/>
            <person name="Sasaki D."/>
            <person name="Tomaru Y."/>
            <person name="Fukuda S."/>
            <person name="Kanamori-Katayama M."/>
            <person name="Suzuki M."/>
            <person name="Aoki J."/>
            <person name="Arakawa T."/>
            <person name="Iida J."/>
            <person name="Imamura K."/>
            <person name="Itoh M."/>
            <person name="Kato T."/>
            <person name="Kawaji H."/>
            <person name="Kawagashira N."/>
            <person name="Kawashima T."/>
            <person name="Kojima M."/>
            <person name="Kondo S."/>
            <person name="Konno H."/>
            <person name="Nakano K."/>
            <person name="Ninomiya N."/>
            <person name="Nishio T."/>
            <person name="Okada M."/>
            <person name="Plessy C."/>
            <person name="Shibata K."/>
            <person name="Shiraki T."/>
            <person name="Suzuki S."/>
            <person name="Tagami M."/>
            <person name="Waki K."/>
            <person name="Watahiki A."/>
            <person name="Okamura-Oho Y."/>
            <person name="Suzuki H."/>
            <person name="Kawai J."/>
            <person name="Hayashizaki Y."/>
        </authorList>
    </citation>
    <scope>NUCLEOTIDE SEQUENCE [LARGE SCALE MRNA] (ISOFORMS 1 AND 2)</scope>
    <source>
        <strain>C57BL/6J</strain>
        <tissue>Testis</tissue>
    </source>
</reference>
<reference key="2">
    <citation type="journal article" date="2004" name="Genome Res.">
        <title>The status, quality, and expansion of the NIH full-length cDNA project: the Mammalian Gene Collection (MGC).</title>
        <authorList>
            <consortium name="The MGC Project Team"/>
        </authorList>
    </citation>
    <scope>NUCLEOTIDE SEQUENCE [LARGE SCALE MRNA] (ISOFORM 1)</scope>
    <source>
        <strain>Czech II</strain>
        <tissue>Mammary tumor</tissue>
    </source>
</reference>
<reference key="3">
    <citation type="journal article" date="2010" name="Cell">
        <title>A tissue-specific atlas of mouse protein phosphorylation and expression.</title>
        <authorList>
            <person name="Huttlin E.L."/>
            <person name="Jedrychowski M.P."/>
            <person name="Elias J.E."/>
            <person name="Goswami T."/>
            <person name="Rad R."/>
            <person name="Beausoleil S.A."/>
            <person name="Villen J."/>
            <person name="Haas W."/>
            <person name="Sowa M.E."/>
            <person name="Gygi S.P."/>
        </authorList>
    </citation>
    <scope>IDENTIFICATION BY MASS SPECTROMETRY [LARGE SCALE ANALYSIS]</scope>
    <source>
        <tissue>Heart</tissue>
        <tissue>Kidney</tissue>
        <tissue>Liver</tissue>
        <tissue>Spleen</tissue>
        <tissue>Testis</tissue>
    </source>
</reference>
<name>PPCS_MOUSE</name>
<feature type="initiator methionine" description="Removed" evidence="2">
    <location>
        <position position="1"/>
    </location>
</feature>
<feature type="chain" id="PRO_0000182041" description="Phosphopantothenate--cysteine ligase">
    <location>
        <begin position="2"/>
        <end position="311"/>
    </location>
</feature>
<feature type="modified residue" description="N-acetylalanine" evidence="2">
    <location>
        <position position="2"/>
    </location>
</feature>
<feature type="splice variant" id="VSP_010244" description="In isoform 2." evidence="3">
    <location>
        <begin position="1"/>
        <end position="173"/>
    </location>
</feature>
<organism>
    <name type="scientific">Mus musculus</name>
    <name type="common">Mouse</name>
    <dbReference type="NCBI Taxonomy" id="10090"/>
    <lineage>
        <taxon>Eukaryota</taxon>
        <taxon>Metazoa</taxon>
        <taxon>Chordata</taxon>
        <taxon>Craniata</taxon>
        <taxon>Vertebrata</taxon>
        <taxon>Euteleostomi</taxon>
        <taxon>Mammalia</taxon>
        <taxon>Eutheria</taxon>
        <taxon>Euarchontoglires</taxon>
        <taxon>Glires</taxon>
        <taxon>Rodentia</taxon>
        <taxon>Myomorpha</taxon>
        <taxon>Muroidea</taxon>
        <taxon>Muridae</taxon>
        <taxon>Murinae</taxon>
        <taxon>Mus</taxon>
        <taxon>Mus</taxon>
    </lineage>
</organism>
<dbReference type="EC" id="6.3.2.51" evidence="2"/>
<dbReference type="EMBL" id="AK006290">
    <property type="protein sequence ID" value="BAB24509.1"/>
    <property type="molecule type" value="mRNA"/>
</dbReference>
<dbReference type="EMBL" id="AK159952">
    <property type="protein sequence ID" value="BAE35508.1"/>
    <property type="molecule type" value="mRNA"/>
</dbReference>
<dbReference type="EMBL" id="BC021894">
    <property type="protein sequence ID" value="AAH21894.1"/>
    <property type="molecule type" value="mRNA"/>
</dbReference>
<dbReference type="CCDS" id="CCDS18581.1">
    <molecule id="Q8VDG5-1"/>
</dbReference>
<dbReference type="CCDS" id="CCDS89823.1">
    <molecule id="Q8VDG5-2"/>
</dbReference>
<dbReference type="RefSeq" id="NP_001342143.1">
    <molecule id="Q8VDG5-2"/>
    <property type="nucleotide sequence ID" value="NM_001355214.1"/>
</dbReference>
<dbReference type="RefSeq" id="NP_080770.2">
    <molecule id="Q8VDG5-1"/>
    <property type="nucleotide sequence ID" value="NM_026494.4"/>
</dbReference>
<dbReference type="RefSeq" id="XP_017175397.1">
    <property type="nucleotide sequence ID" value="XM_017319908.1"/>
</dbReference>
<dbReference type="SMR" id="Q8VDG5"/>
<dbReference type="FunCoup" id="Q8VDG5">
    <property type="interactions" value="3734"/>
</dbReference>
<dbReference type="STRING" id="10090.ENSMUSP00000030385"/>
<dbReference type="GlyGen" id="Q8VDG5">
    <property type="glycosylation" value="1 site, 1 O-linked glycan (1 site)"/>
</dbReference>
<dbReference type="iPTMnet" id="Q8VDG5"/>
<dbReference type="PhosphoSitePlus" id="Q8VDG5"/>
<dbReference type="SwissPalm" id="Q8VDG5"/>
<dbReference type="REPRODUCTION-2DPAGE" id="IPI00135484"/>
<dbReference type="jPOST" id="Q8VDG5"/>
<dbReference type="PaxDb" id="10090-ENSMUSP00000030385"/>
<dbReference type="PeptideAtlas" id="Q8VDG5"/>
<dbReference type="ProteomicsDB" id="291710">
    <molecule id="Q8VDG5-1"/>
</dbReference>
<dbReference type="ProteomicsDB" id="291711">
    <molecule id="Q8VDG5-2"/>
</dbReference>
<dbReference type="Pumba" id="Q8VDG5"/>
<dbReference type="Antibodypedia" id="32205">
    <property type="antibodies" value="86 antibodies from 23 providers"/>
</dbReference>
<dbReference type="DNASU" id="106564"/>
<dbReference type="Ensembl" id="ENSMUST00000030385.13">
    <molecule id="Q8VDG5-1"/>
    <property type="protein sequence ID" value="ENSMUSP00000030385.7"/>
    <property type="gene ID" value="ENSMUSG00000028636.15"/>
</dbReference>
<dbReference type="Ensembl" id="ENSMUST00000106316.2">
    <molecule id="Q8VDG5-2"/>
    <property type="protein sequence ID" value="ENSMUSP00000101923.2"/>
    <property type="gene ID" value="ENSMUSG00000028636.15"/>
</dbReference>
<dbReference type="GeneID" id="106564"/>
<dbReference type="KEGG" id="mmu:106564"/>
<dbReference type="UCSC" id="uc008uml.1">
    <molecule id="Q8VDG5-2"/>
    <property type="organism name" value="mouse"/>
</dbReference>
<dbReference type="UCSC" id="uc008umm.1">
    <molecule id="Q8VDG5-1"/>
    <property type="organism name" value="mouse"/>
</dbReference>
<dbReference type="AGR" id="MGI:1915237"/>
<dbReference type="CTD" id="79717"/>
<dbReference type="MGI" id="MGI:1915237">
    <property type="gene designation" value="Ppcs"/>
</dbReference>
<dbReference type="VEuPathDB" id="HostDB:ENSMUSG00000028636"/>
<dbReference type="eggNOG" id="KOG2728">
    <property type="taxonomic scope" value="Eukaryota"/>
</dbReference>
<dbReference type="GeneTree" id="ENSGT00950000182834"/>
<dbReference type="HOGENOM" id="CLU_042326_2_0_1"/>
<dbReference type="InParanoid" id="Q8VDG5"/>
<dbReference type="OMA" id="LERYQHH"/>
<dbReference type="OrthoDB" id="70224at2759"/>
<dbReference type="PhylomeDB" id="Q8VDG5"/>
<dbReference type="TreeFam" id="TF105615"/>
<dbReference type="Reactome" id="R-MMU-196783">
    <property type="pathway name" value="Coenzyme A biosynthesis"/>
</dbReference>
<dbReference type="UniPathway" id="UPA00241">
    <property type="reaction ID" value="UER00353"/>
</dbReference>
<dbReference type="BioGRID-ORCS" id="106564">
    <property type="hits" value="22 hits in 82 CRISPR screens"/>
</dbReference>
<dbReference type="PRO" id="PR:Q8VDG5"/>
<dbReference type="Proteomes" id="UP000000589">
    <property type="component" value="Chromosome 4"/>
</dbReference>
<dbReference type="RNAct" id="Q8VDG5">
    <property type="molecule type" value="protein"/>
</dbReference>
<dbReference type="Bgee" id="ENSMUSG00000028636">
    <property type="expression patterns" value="Expressed in right kidney and 230 other cell types or tissues"/>
</dbReference>
<dbReference type="GO" id="GO:0005524">
    <property type="term" value="F:ATP binding"/>
    <property type="evidence" value="ECO:0007669"/>
    <property type="project" value="UniProtKB-KW"/>
</dbReference>
<dbReference type="GO" id="GO:0004632">
    <property type="term" value="F:phosphopantothenate--cysteine ligase activity"/>
    <property type="evidence" value="ECO:0000266"/>
    <property type="project" value="MGI"/>
</dbReference>
<dbReference type="GO" id="GO:0042803">
    <property type="term" value="F:protein homodimerization activity"/>
    <property type="evidence" value="ECO:0007669"/>
    <property type="project" value="Ensembl"/>
</dbReference>
<dbReference type="GO" id="GO:0006085">
    <property type="term" value="P:acetyl-CoA biosynthetic process"/>
    <property type="evidence" value="ECO:0007669"/>
    <property type="project" value="Ensembl"/>
</dbReference>
<dbReference type="GO" id="GO:0015937">
    <property type="term" value="P:coenzyme A biosynthetic process"/>
    <property type="evidence" value="ECO:0000266"/>
    <property type="project" value="MGI"/>
</dbReference>
<dbReference type="GO" id="GO:0003015">
    <property type="term" value="P:heart process"/>
    <property type="evidence" value="ECO:0007669"/>
    <property type="project" value="Ensembl"/>
</dbReference>
<dbReference type="FunFam" id="3.40.50.10300:FF:000002">
    <property type="entry name" value="Phosphopantothenate--cysteine ligase 2"/>
    <property type="match status" value="1"/>
</dbReference>
<dbReference type="Gene3D" id="3.40.50.10300">
    <property type="entry name" value="CoaB-like"/>
    <property type="match status" value="1"/>
</dbReference>
<dbReference type="InterPro" id="IPR035929">
    <property type="entry name" value="CoaB-like_sf"/>
</dbReference>
<dbReference type="InterPro" id="IPR007085">
    <property type="entry name" value="DNA/pantothenate-metab_flavo_C"/>
</dbReference>
<dbReference type="PANTHER" id="PTHR12290">
    <property type="entry name" value="CORNICHON-RELATED"/>
    <property type="match status" value="1"/>
</dbReference>
<dbReference type="Pfam" id="PF04127">
    <property type="entry name" value="DFP"/>
    <property type="match status" value="2"/>
</dbReference>
<dbReference type="SUPFAM" id="SSF102645">
    <property type="entry name" value="CoaB-like"/>
    <property type="match status" value="1"/>
</dbReference>
<proteinExistence type="evidence at protein level"/>
<protein>
    <recommendedName>
        <fullName>Phosphopantothenate--cysteine ligase</fullName>
        <ecNumber evidence="2">6.3.2.51</ecNumber>
    </recommendedName>
    <alternativeName>
        <fullName>Phosphopantothenoylcysteine synthetase</fullName>
        <shortName>PPC synthetase</shortName>
    </alternativeName>
</protein>